<sequence length="324" mass="34373">MTAAYANLFSTIAPKDFGRVAVLFGGLSAEREVSLKSGNAVLTALQSAGVDAFGIDVGADILQRLLSEKIDRAFIILHGRGGEDGSMQGLLEVAGIPYTGSGILASALAMDKLRTKQVWHTLGIPTPRHAVLRSEADCISAATELGFPLIVKPAHEGSSIGMAKVSSASELIDAWKAASTYDSQVLVEQWIHGPEFTIATLRDQVLPPIALGTPHTFYDYDAKYIANDTQYRIPCGLDAAKEKELMDLTAQACEALGIAGWGRADVMQDADGKFWFLEVNTAPGMTDHSLVPMAAKAAGLDFQQLVLAILAASVDADGKKEARG</sequence>
<evidence type="ECO:0000250" key="1"/>
<evidence type="ECO:0000255" key="2">
    <source>
        <dbReference type="HAMAP-Rule" id="MF_00047"/>
    </source>
</evidence>
<proteinExistence type="inferred from homology"/>
<comment type="function">
    <text evidence="2">Cell wall formation.</text>
</comment>
<comment type="catalytic activity">
    <reaction evidence="2">
        <text>2 D-alanine + ATP = D-alanyl-D-alanine + ADP + phosphate + H(+)</text>
        <dbReference type="Rhea" id="RHEA:11224"/>
        <dbReference type="ChEBI" id="CHEBI:15378"/>
        <dbReference type="ChEBI" id="CHEBI:30616"/>
        <dbReference type="ChEBI" id="CHEBI:43474"/>
        <dbReference type="ChEBI" id="CHEBI:57416"/>
        <dbReference type="ChEBI" id="CHEBI:57822"/>
        <dbReference type="ChEBI" id="CHEBI:456216"/>
        <dbReference type="EC" id="6.3.2.4"/>
    </reaction>
</comment>
<comment type="cofactor">
    <cofactor evidence="1">
        <name>Mg(2+)</name>
        <dbReference type="ChEBI" id="CHEBI:18420"/>
    </cofactor>
    <cofactor evidence="1">
        <name>Mn(2+)</name>
        <dbReference type="ChEBI" id="CHEBI:29035"/>
    </cofactor>
    <text evidence="1">Binds 2 magnesium or manganese ions per subunit.</text>
</comment>
<comment type="pathway">
    <text evidence="2">Cell wall biogenesis; peptidoglycan biosynthesis.</text>
</comment>
<comment type="subcellular location">
    <subcellularLocation>
        <location evidence="2">Cytoplasm</location>
    </subcellularLocation>
</comment>
<comment type="similarity">
    <text evidence="2">Belongs to the D-alanine--D-alanine ligase family.</text>
</comment>
<dbReference type="EC" id="6.3.2.4" evidence="2"/>
<dbReference type="EMBL" id="CP000094">
    <property type="protein sequence ID" value="ABA76408.1"/>
    <property type="molecule type" value="Genomic_DNA"/>
</dbReference>
<dbReference type="RefSeq" id="WP_007956758.1">
    <property type="nucleotide sequence ID" value="NC_007492.2"/>
</dbReference>
<dbReference type="SMR" id="Q3K746"/>
<dbReference type="KEGG" id="pfo:Pfl01_4671"/>
<dbReference type="eggNOG" id="COG1181">
    <property type="taxonomic scope" value="Bacteria"/>
</dbReference>
<dbReference type="HOGENOM" id="CLU_039268_1_2_6"/>
<dbReference type="UniPathway" id="UPA00219"/>
<dbReference type="Proteomes" id="UP000002704">
    <property type="component" value="Chromosome"/>
</dbReference>
<dbReference type="GO" id="GO:0005829">
    <property type="term" value="C:cytosol"/>
    <property type="evidence" value="ECO:0007669"/>
    <property type="project" value="TreeGrafter"/>
</dbReference>
<dbReference type="GO" id="GO:0005524">
    <property type="term" value="F:ATP binding"/>
    <property type="evidence" value="ECO:0007669"/>
    <property type="project" value="UniProtKB-KW"/>
</dbReference>
<dbReference type="GO" id="GO:0008716">
    <property type="term" value="F:D-alanine-D-alanine ligase activity"/>
    <property type="evidence" value="ECO:0007669"/>
    <property type="project" value="UniProtKB-UniRule"/>
</dbReference>
<dbReference type="GO" id="GO:0046872">
    <property type="term" value="F:metal ion binding"/>
    <property type="evidence" value="ECO:0007669"/>
    <property type="project" value="UniProtKB-KW"/>
</dbReference>
<dbReference type="GO" id="GO:0071555">
    <property type="term" value="P:cell wall organization"/>
    <property type="evidence" value="ECO:0007669"/>
    <property type="project" value="UniProtKB-KW"/>
</dbReference>
<dbReference type="GO" id="GO:0009252">
    <property type="term" value="P:peptidoglycan biosynthetic process"/>
    <property type="evidence" value="ECO:0007669"/>
    <property type="project" value="UniProtKB-UniRule"/>
</dbReference>
<dbReference type="GO" id="GO:0008360">
    <property type="term" value="P:regulation of cell shape"/>
    <property type="evidence" value="ECO:0007669"/>
    <property type="project" value="UniProtKB-KW"/>
</dbReference>
<dbReference type="FunFam" id="3.30.1490.20:FF:000007">
    <property type="entry name" value="D-alanine--D-alanine ligase"/>
    <property type="match status" value="1"/>
</dbReference>
<dbReference type="FunFam" id="3.30.470.20:FF:000008">
    <property type="entry name" value="D-alanine--D-alanine ligase"/>
    <property type="match status" value="1"/>
</dbReference>
<dbReference type="FunFam" id="3.40.50.20:FF:000013">
    <property type="entry name" value="D-alanine--D-alanine ligase"/>
    <property type="match status" value="1"/>
</dbReference>
<dbReference type="Gene3D" id="3.40.50.20">
    <property type="match status" value="1"/>
</dbReference>
<dbReference type="Gene3D" id="3.30.1490.20">
    <property type="entry name" value="ATP-grasp fold, A domain"/>
    <property type="match status" value="1"/>
</dbReference>
<dbReference type="Gene3D" id="3.30.470.20">
    <property type="entry name" value="ATP-grasp fold, B domain"/>
    <property type="match status" value="1"/>
</dbReference>
<dbReference type="HAMAP" id="MF_00047">
    <property type="entry name" value="Dala_Dala_lig"/>
    <property type="match status" value="1"/>
</dbReference>
<dbReference type="InterPro" id="IPR011761">
    <property type="entry name" value="ATP-grasp"/>
</dbReference>
<dbReference type="InterPro" id="IPR013815">
    <property type="entry name" value="ATP_grasp_subdomain_1"/>
</dbReference>
<dbReference type="InterPro" id="IPR000291">
    <property type="entry name" value="D-Ala_lig_Van_CS"/>
</dbReference>
<dbReference type="InterPro" id="IPR005905">
    <property type="entry name" value="D_ala_D_ala"/>
</dbReference>
<dbReference type="InterPro" id="IPR011095">
    <property type="entry name" value="Dala_Dala_lig_C"/>
</dbReference>
<dbReference type="InterPro" id="IPR011127">
    <property type="entry name" value="Dala_Dala_lig_N"/>
</dbReference>
<dbReference type="InterPro" id="IPR016185">
    <property type="entry name" value="PreATP-grasp_dom_sf"/>
</dbReference>
<dbReference type="NCBIfam" id="TIGR01205">
    <property type="entry name" value="D_ala_D_alaTIGR"/>
    <property type="match status" value="1"/>
</dbReference>
<dbReference type="NCBIfam" id="NF002378">
    <property type="entry name" value="PRK01372.1"/>
    <property type="match status" value="1"/>
</dbReference>
<dbReference type="PANTHER" id="PTHR23132">
    <property type="entry name" value="D-ALANINE--D-ALANINE LIGASE"/>
    <property type="match status" value="1"/>
</dbReference>
<dbReference type="PANTHER" id="PTHR23132:SF23">
    <property type="entry name" value="D-ALANINE--D-ALANINE LIGASE B"/>
    <property type="match status" value="1"/>
</dbReference>
<dbReference type="Pfam" id="PF07478">
    <property type="entry name" value="Dala_Dala_lig_C"/>
    <property type="match status" value="1"/>
</dbReference>
<dbReference type="Pfam" id="PF01820">
    <property type="entry name" value="Dala_Dala_lig_N"/>
    <property type="match status" value="1"/>
</dbReference>
<dbReference type="PIRSF" id="PIRSF039102">
    <property type="entry name" value="Ddl/VanB"/>
    <property type="match status" value="1"/>
</dbReference>
<dbReference type="SUPFAM" id="SSF56059">
    <property type="entry name" value="Glutathione synthetase ATP-binding domain-like"/>
    <property type="match status" value="1"/>
</dbReference>
<dbReference type="SUPFAM" id="SSF52440">
    <property type="entry name" value="PreATP-grasp domain"/>
    <property type="match status" value="1"/>
</dbReference>
<dbReference type="PROSITE" id="PS50975">
    <property type="entry name" value="ATP_GRASP"/>
    <property type="match status" value="1"/>
</dbReference>
<dbReference type="PROSITE" id="PS00843">
    <property type="entry name" value="DALA_DALA_LIGASE_1"/>
    <property type="match status" value="1"/>
</dbReference>
<dbReference type="PROSITE" id="PS00844">
    <property type="entry name" value="DALA_DALA_LIGASE_2"/>
    <property type="match status" value="1"/>
</dbReference>
<accession>Q3K746</accession>
<protein>
    <recommendedName>
        <fullName evidence="2">D-alanine--D-alanine ligase</fullName>
        <ecNumber evidence="2">6.3.2.4</ecNumber>
    </recommendedName>
    <alternativeName>
        <fullName evidence="2">D-Ala-D-Ala ligase</fullName>
    </alternativeName>
    <alternativeName>
        <fullName evidence="2">D-alanylalanine synthetase</fullName>
    </alternativeName>
</protein>
<reference key="1">
    <citation type="journal article" date="2009" name="Genome Biol.">
        <title>Genomic and genetic analyses of diversity and plant interactions of Pseudomonas fluorescens.</title>
        <authorList>
            <person name="Silby M.W."/>
            <person name="Cerdeno-Tarraga A.M."/>
            <person name="Vernikos G.S."/>
            <person name="Giddens S.R."/>
            <person name="Jackson R.W."/>
            <person name="Preston G.M."/>
            <person name="Zhang X.-X."/>
            <person name="Moon C.D."/>
            <person name="Gehrig S.M."/>
            <person name="Godfrey S.A.C."/>
            <person name="Knight C.G."/>
            <person name="Malone J.G."/>
            <person name="Robinson Z."/>
            <person name="Spiers A.J."/>
            <person name="Harris S."/>
            <person name="Challis G.L."/>
            <person name="Yaxley A.M."/>
            <person name="Harris D."/>
            <person name="Seeger K."/>
            <person name="Murphy L."/>
            <person name="Rutter S."/>
            <person name="Squares R."/>
            <person name="Quail M.A."/>
            <person name="Saunders E."/>
            <person name="Mavromatis K."/>
            <person name="Brettin T.S."/>
            <person name="Bentley S.D."/>
            <person name="Hothersall J."/>
            <person name="Stephens E."/>
            <person name="Thomas C.M."/>
            <person name="Parkhill J."/>
            <person name="Levy S.B."/>
            <person name="Rainey P.B."/>
            <person name="Thomson N.R."/>
        </authorList>
    </citation>
    <scope>NUCLEOTIDE SEQUENCE [LARGE SCALE GENOMIC DNA]</scope>
    <source>
        <strain>Pf0-1</strain>
    </source>
</reference>
<keyword id="KW-0067">ATP-binding</keyword>
<keyword id="KW-0133">Cell shape</keyword>
<keyword id="KW-0961">Cell wall biogenesis/degradation</keyword>
<keyword id="KW-0963">Cytoplasm</keyword>
<keyword id="KW-0436">Ligase</keyword>
<keyword id="KW-0460">Magnesium</keyword>
<keyword id="KW-0464">Manganese</keyword>
<keyword id="KW-0479">Metal-binding</keyword>
<keyword id="KW-0547">Nucleotide-binding</keyword>
<keyword id="KW-0573">Peptidoglycan synthesis</keyword>
<organism>
    <name type="scientific">Pseudomonas fluorescens (strain Pf0-1)</name>
    <dbReference type="NCBI Taxonomy" id="205922"/>
    <lineage>
        <taxon>Bacteria</taxon>
        <taxon>Pseudomonadati</taxon>
        <taxon>Pseudomonadota</taxon>
        <taxon>Gammaproteobacteria</taxon>
        <taxon>Pseudomonadales</taxon>
        <taxon>Pseudomonadaceae</taxon>
        <taxon>Pseudomonas</taxon>
    </lineage>
</organism>
<name>DDL_PSEPF</name>
<feature type="chain" id="PRO_1000030486" description="D-alanine--D-alanine ligase">
    <location>
        <begin position="1"/>
        <end position="324"/>
    </location>
</feature>
<feature type="domain" description="ATP-grasp" evidence="2">
    <location>
        <begin position="116"/>
        <end position="311"/>
    </location>
</feature>
<feature type="binding site" evidence="2">
    <location>
        <begin position="142"/>
        <end position="197"/>
    </location>
    <ligand>
        <name>ATP</name>
        <dbReference type="ChEBI" id="CHEBI:30616"/>
    </ligand>
</feature>
<feature type="binding site" evidence="2">
    <location>
        <position position="265"/>
    </location>
    <ligand>
        <name>Mg(2+)</name>
        <dbReference type="ChEBI" id="CHEBI:18420"/>
        <label>1</label>
    </ligand>
</feature>
<feature type="binding site" evidence="2">
    <location>
        <position position="278"/>
    </location>
    <ligand>
        <name>Mg(2+)</name>
        <dbReference type="ChEBI" id="CHEBI:18420"/>
        <label>1</label>
    </ligand>
</feature>
<feature type="binding site" evidence="2">
    <location>
        <position position="278"/>
    </location>
    <ligand>
        <name>Mg(2+)</name>
        <dbReference type="ChEBI" id="CHEBI:18420"/>
        <label>2</label>
    </ligand>
</feature>
<feature type="binding site" evidence="2">
    <location>
        <position position="280"/>
    </location>
    <ligand>
        <name>Mg(2+)</name>
        <dbReference type="ChEBI" id="CHEBI:18420"/>
        <label>2</label>
    </ligand>
</feature>
<gene>
    <name evidence="2" type="primary">ddl</name>
    <name type="ordered locus">Pfl01_4671</name>
</gene>